<feature type="chain" id="PRO_0000301303" description="Phosphoglucosamine mutase">
    <location>
        <begin position="1"/>
        <end position="448"/>
    </location>
</feature>
<feature type="active site" description="Phosphoserine intermediate" evidence="1">
    <location>
        <position position="100"/>
    </location>
</feature>
<feature type="binding site" description="via phosphate group" evidence="1">
    <location>
        <position position="100"/>
    </location>
    <ligand>
        <name>Mg(2+)</name>
        <dbReference type="ChEBI" id="CHEBI:18420"/>
    </ligand>
</feature>
<feature type="binding site" evidence="1">
    <location>
        <position position="240"/>
    </location>
    <ligand>
        <name>Mg(2+)</name>
        <dbReference type="ChEBI" id="CHEBI:18420"/>
    </ligand>
</feature>
<feature type="binding site" evidence="1">
    <location>
        <position position="242"/>
    </location>
    <ligand>
        <name>Mg(2+)</name>
        <dbReference type="ChEBI" id="CHEBI:18420"/>
    </ligand>
</feature>
<feature type="binding site" evidence="1">
    <location>
        <position position="244"/>
    </location>
    <ligand>
        <name>Mg(2+)</name>
        <dbReference type="ChEBI" id="CHEBI:18420"/>
    </ligand>
</feature>
<feature type="modified residue" description="Phosphoserine" evidence="1">
    <location>
        <position position="100"/>
    </location>
</feature>
<accession>Q0SQL7</accession>
<evidence type="ECO:0000255" key="1">
    <source>
        <dbReference type="HAMAP-Rule" id="MF_01554"/>
    </source>
</evidence>
<proteinExistence type="inferred from homology"/>
<comment type="function">
    <text evidence="1">Catalyzes the conversion of glucosamine-6-phosphate to glucosamine-1-phosphate.</text>
</comment>
<comment type="catalytic activity">
    <reaction evidence="1">
        <text>alpha-D-glucosamine 1-phosphate = D-glucosamine 6-phosphate</text>
        <dbReference type="Rhea" id="RHEA:23424"/>
        <dbReference type="ChEBI" id="CHEBI:58516"/>
        <dbReference type="ChEBI" id="CHEBI:58725"/>
        <dbReference type="EC" id="5.4.2.10"/>
    </reaction>
</comment>
<comment type="cofactor">
    <cofactor evidence="1">
        <name>Mg(2+)</name>
        <dbReference type="ChEBI" id="CHEBI:18420"/>
    </cofactor>
    <text evidence="1">Binds 1 Mg(2+) ion per subunit.</text>
</comment>
<comment type="PTM">
    <text evidence="1">Activated by phosphorylation.</text>
</comment>
<comment type="similarity">
    <text evidence="1">Belongs to the phosphohexose mutase family.</text>
</comment>
<keyword id="KW-0413">Isomerase</keyword>
<keyword id="KW-0460">Magnesium</keyword>
<keyword id="KW-0479">Metal-binding</keyword>
<keyword id="KW-0597">Phosphoprotein</keyword>
<organism>
    <name type="scientific">Clostridium perfringens (strain SM101 / Type A)</name>
    <dbReference type="NCBI Taxonomy" id="289380"/>
    <lineage>
        <taxon>Bacteria</taxon>
        <taxon>Bacillati</taxon>
        <taxon>Bacillota</taxon>
        <taxon>Clostridia</taxon>
        <taxon>Eubacteriales</taxon>
        <taxon>Clostridiaceae</taxon>
        <taxon>Clostridium</taxon>
    </lineage>
</organism>
<protein>
    <recommendedName>
        <fullName evidence="1">Phosphoglucosamine mutase</fullName>
        <ecNumber evidence="1">5.4.2.10</ecNumber>
    </recommendedName>
</protein>
<sequence>MSRLFGTDGVRGIANTELTAELAYNLGRAGAYVLTEGTHKPKILVAKDTRISGDMLEAALVAGILSVGAEALCLGVVPTPAVAHLTRAYGADAGVMISASHNPVEYNGIKFFDDKGYKLSDDLEDEIQRVIESGFENVPSPTGANLGREIIEKAALEDYISFAKDTIGISLEGLRVALDCANGASHEAAVRAFRELGAEIFVINDNPDGTNINENCGSTHPEELMEYVVKKKCHMGFAFDGDADRCLAVDEQGNLVDGDFILTICAKYLKELGRLKDDTLVVTVMSNLGLMIACKNEKINTAVTKVGDRYVLEEMLAKGYSLGGEQSGHIIFLDHNSTGDGLVTALQVASIVKRTGKSLFELKNVMKVLPQVLVNAKVPNNMKNIYEEDEEIIAEIKKMEAALDGCGRVLIRPSGTEPLVRVMLEGENQAEIDEMAHNLANMIEAKCN</sequence>
<gene>
    <name evidence="1" type="primary">glmM</name>
    <name type="ordered locus">CPR_2324</name>
</gene>
<reference key="1">
    <citation type="journal article" date="2006" name="Genome Res.">
        <title>Skewed genomic variability in strains of the toxigenic bacterial pathogen, Clostridium perfringens.</title>
        <authorList>
            <person name="Myers G.S.A."/>
            <person name="Rasko D.A."/>
            <person name="Cheung J.K."/>
            <person name="Ravel J."/>
            <person name="Seshadri R."/>
            <person name="DeBoy R.T."/>
            <person name="Ren Q."/>
            <person name="Varga J."/>
            <person name="Awad M.M."/>
            <person name="Brinkac L.M."/>
            <person name="Daugherty S.C."/>
            <person name="Haft D.H."/>
            <person name="Dodson R.J."/>
            <person name="Madupu R."/>
            <person name="Nelson W.C."/>
            <person name="Rosovitz M.J."/>
            <person name="Sullivan S.A."/>
            <person name="Khouri H."/>
            <person name="Dimitrov G.I."/>
            <person name="Watkins K.L."/>
            <person name="Mulligan S."/>
            <person name="Benton J."/>
            <person name="Radune D."/>
            <person name="Fisher D.J."/>
            <person name="Atkins H.S."/>
            <person name="Hiscox T."/>
            <person name="Jost B.H."/>
            <person name="Billington S.J."/>
            <person name="Songer J.G."/>
            <person name="McClane B.A."/>
            <person name="Titball R.W."/>
            <person name="Rood J.I."/>
            <person name="Melville S.B."/>
            <person name="Paulsen I.T."/>
        </authorList>
    </citation>
    <scope>NUCLEOTIDE SEQUENCE [LARGE SCALE GENOMIC DNA]</scope>
    <source>
        <strain>SM101 / Type A</strain>
    </source>
</reference>
<dbReference type="EC" id="5.4.2.10" evidence="1"/>
<dbReference type="EMBL" id="CP000312">
    <property type="protein sequence ID" value="ABG85907.1"/>
    <property type="molecule type" value="Genomic_DNA"/>
</dbReference>
<dbReference type="RefSeq" id="WP_011593094.1">
    <property type="nucleotide sequence ID" value="NC_008262.1"/>
</dbReference>
<dbReference type="SMR" id="Q0SQL7"/>
<dbReference type="KEGG" id="cpr:CPR_2324"/>
<dbReference type="Proteomes" id="UP000001824">
    <property type="component" value="Chromosome"/>
</dbReference>
<dbReference type="GO" id="GO:0005829">
    <property type="term" value="C:cytosol"/>
    <property type="evidence" value="ECO:0007669"/>
    <property type="project" value="TreeGrafter"/>
</dbReference>
<dbReference type="GO" id="GO:0000287">
    <property type="term" value="F:magnesium ion binding"/>
    <property type="evidence" value="ECO:0007669"/>
    <property type="project" value="UniProtKB-UniRule"/>
</dbReference>
<dbReference type="GO" id="GO:0008966">
    <property type="term" value="F:phosphoglucosamine mutase activity"/>
    <property type="evidence" value="ECO:0007669"/>
    <property type="project" value="UniProtKB-UniRule"/>
</dbReference>
<dbReference type="GO" id="GO:0004615">
    <property type="term" value="F:phosphomannomutase activity"/>
    <property type="evidence" value="ECO:0007669"/>
    <property type="project" value="TreeGrafter"/>
</dbReference>
<dbReference type="GO" id="GO:0005975">
    <property type="term" value="P:carbohydrate metabolic process"/>
    <property type="evidence" value="ECO:0007669"/>
    <property type="project" value="InterPro"/>
</dbReference>
<dbReference type="GO" id="GO:0009252">
    <property type="term" value="P:peptidoglycan biosynthetic process"/>
    <property type="evidence" value="ECO:0007669"/>
    <property type="project" value="TreeGrafter"/>
</dbReference>
<dbReference type="GO" id="GO:0006048">
    <property type="term" value="P:UDP-N-acetylglucosamine biosynthetic process"/>
    <property type="evidence" value="ECO:0007669"/>
    <property type="project" value="TreeGrafter"/>
</dbReference>
<dbReference type="CDD" id="cd05802">
    <property type="entry name" value="GlmM"/>
    <property type="match status" value="1"/>
</dbReference>
<dbReference type="FunFam" id="3.30.310.50:FF:000001">
    <property type="entry name" value="Phosphoglucosamine mutase"/>
    <property type="match status" value="1"/>
</dbReference>
<dbReference type="FunFam" id="3.40.120.10:FF:000001">
    <property type="entry name" value="Phosphoglucosamine mutase"/>
    <property type="match status" value="1"/>
</dbReference>
<dbReference type="FunFam" id="3.40.120.10:FF:000002">
    <property type="entry name" value="Phosphoglucosamine mutase"/>
    <property type="match status" value="1"/>
</dbReference>
<dbReference type="Gene3D" id="3.40.120.10">
    <property type="entry name" value="Alpha-D-Glucose-1,6-Bisphosphate, subunit A, domain 3"/>
    <property type="match status" value="3"/>
</dbReference>
<dbReference type="Gene3D" id="3.30.310.50">
    <property type="entry name" value="Alpha-D-phosphohexomutase, C-terminal domain"/>
    <property type="match status" value="1"/>
</dbReference>
<dbReference type="HAMAP" id="MF_01554_B">
    <property type="entry name" value="GlmM_B"/>
    <property type="match status" value="1"/>
</dbReference>
<dbReference type="InterPro" id="IPR005844">
    <property type="entry name" value="A-D-PHexomutase_a/b/a-I"/>
</dbReference>
<dbReference type="InterPro" id="IPR016055">
    <property type="entry name" value="A-D-PHexomutase_a/b/a-I/II/III"/>
</dbReference>
<dbReference type="InterPro" id="IPR005845">
    <property type="entry name" value="A-D-PHexomutase_a/b/a-II"/>
</dbReference>
<dbReference type="InterPro" id="IPR005846">
    <property type="entry name" value="A-D-PHexomutase_a/b/a-III"/>
</dbReference>
<dbReference type="InterPro" id="IPR005843">
    <property type="entry name" value="A-D-PHexomutase_C"/>
</dbReference>
<dbReference type="InterPro" id="IPR036900">
    <property type="entry name" value="A-D-PHexomutase_C_sf"/>
</dbReference>
<dbReference type="InterPro" id="IPR016066">
    <property type="entry name" value="A-D-PHexomutase_CS"/>
</dbReference>
<dbReference type="InterPro" id="IPR005841">
    <property type="entry name" value="Alpha-D-phosphohexomutase_SF"/>
</dbReference>
<dbReference type="InterPro" id="IPR006352">
    <property type="entry name" value="GlmM_bact"/>
</dbReference>
<dbReference type="InterPro" id="IPR050060">
    <property type="entry name" value="Phosphoglucosamine_mutase"/>
</dbReference>
<dbReference type="NCBIfam" id="TIGR01455">
    <property type="entry name" value="glmM"/>
    <property type="match status" value="1"/>
</dbReference>
<dbReference type="NCBIfam" id="NF008139">
    <property type="entry name" value="PRK10887.1"/>
    <property type="match status" value="1"/>
</dbReference>
<dbReference type="PANTHER" id="PTHR42946:SF1">
    <property type="entry name" value="PHOSPHOGLUCOMUTASE (ALPHA-D-GLUCOSE-1,6-BISPHOSPHATE-DEPENDENT)"/>
    <property type="match status" value="1"/>
</dbReference>
<dbReference type="PANTHER" id="PTHR42946">
    <property type="entry name" value="PHOSPHOHEXOSE MUTASE"/>
    <property type="match status" value="1"/>
</dbReference>
<dbReference type="Pfam" id="PF02878">
    <property type="entry name" value="PGM_PMM_I"/>
    <property type="match status" value="1"/>
</dbReference>
<dbReference type="Pfam" id="PF02879">
    <property type="entry name" value="PGM_PMM_II"/>
    <property type="match status" value="1"/>
</dbReference>
<dbReference type="Pfam" id="PF02880">
    <property type="entry name" value="PGM_PMM_III"/>
    <property type="match status" value="1"/>
</dbReference>
<dbReference type="Pfam" id="PF00408">
    <property type="entry name" value="PGM_PMM_IV"/>
    <property type="match status" value="1"/>
</dbReference>
<dbReference type="PRINTS" id="PR00509">
    <property type="entry name" value="PGMPMM"/>
</dbReference>
<dbReference type="SUPFAM" id="SSF55957">
    <property type="entry name" value="Phosphoglucomutase, C-terminal domain"/>
    <property type="match status" value="1"/>
</dbReference>
<dbReference type="SUPFAM" id="SSF53738">
    <property type="entry name" value="Phosphoglucomutase, first 3 domains"/>
    <property type="match status" value="3"/>
</dbReference>
<dbReference type="PROSITE" id="PS00710">
    <property type="entry name" value="PGM_PMM"/>
    <property type="match status" value="1"/>
</dbReference>
<name>GLMM_CLOPS</name>